<name>RL23_PSEU2</name>
<protein>
    <recommendedName>
        <fullName evidence="1">Large ribosomal subunit protein uL23</fullName>
    </recommendedName>
    <alternativeName>
        <fullName evidence="2">50S ribosomal protein L23</fullName>
    </alternativeName>
</protein>
<sequence length="99" mass="10945">MNQERVFKVLLGPHVSEKATVLADKKGQFVFKVATDATKLEIKKAVESLFSVKVERVTTLNVLGKSKRTARGLGKRNDWKKAVISLQPGQDLDFSSSAE</sequence>
<reference key="1">
    <citation type="journal article" date="2005" name="Proc. Natl. Acad. Sci. U.S.A.">
        <title>Comparison of the complete genome sequences of Pseudomonas syringae pv. syringae B728a and pv. tomato DC3000.</title>
        <authorList>
            <person name="Feil H."/>
            <person name="Feil W.S."/>
            <person name="Chain P."/>
            <person name="Larimer F."/>
            <person name="Dibartolo G."/>
            <person name="Copeland A."/>
            <person name="Lykidis A."/>
            <person name="Trong S."/>
            <person name="Nolan M."/>
            <person name="Goltsman E."/>
            <person name="Thiel J."/>
            <person name="Malfatti S."/>
            <person name="Loper J.E."/>
            <person name="Lapidus A."/>
            <person name="Detter J.C."/>
            <person name="Land M."/>
            <person name="Richardson P.M."/>
            <person name="Kyrpides N.C."/>
            <person name="Ivanova N."/>
            <person name="Lindow S.E."/>
        </authorList>
    </citation>
    <scope>NUCLEOTIDE SEQUENCE [LARGE SCALE GENOMIC DNA]</scope>
    <source>
        <strain>B728a</strain>
    </source>
</reference>
<comment type="function">
    <text evidence="1">One of the early assembly proteins it binds 23S rRNA. One of the proteins that surrounds the polypeptide exit tunnel on the outside of the ribosome. Forms the main docking site for trigger factor binding to the ribosome.</text>
</comment>
<comment type="subunit">
    <text evidence="1">Part of the 50S ribosomal subunit. Contacts protein L29, and trigger factor when it is bound to the ribosome.</text>
</comment>
<comment type="similarity">
    <text evidence="1">Belongs to the universal ribosomal protein uL23 family.</text>
</comment>
<evidence type="ECO:0000255" key="1">
    <source>
        <dbReference type="HAMAP-Rule" id="MF_01369"/>
    </source>
</evidence>
<evidence type="ECO:0000305" key="2"/>
<proteinExistence type="inferred from homology"/>
<gene>
    <name evidence="1" type="primary">rplW</name>
    <name type="ordered locus">Psyr_4546</name>
</gene>
<feature type="chain" id="PRO_0000272809" description="Large ribosomal subunit protein uL23">
    <location>
        <begin position="1"/>
        <end position="99"/>
    </location>
</feature>
<accession>Q4ZMP6</accession>
<organism>
    <name type="scientific">Pseudomonas syringae pv. syringae (strain B728a)</name>
    <dbReference type="NCBI Taxonomy" id="205918"/>
    <lineage>
        <taxon>Bacteria</taxon>
        <taxon>Pseudomonadati</taxon>
        <taxon>Pseudomonadota</taxon>
        <taxon>Gammaproteobacteria</taxon>
        <taxon>Pseudomonadales</taxon>
        <taxon>Pseudomonadaceae</taxon>
        <taxon>Pseudomonas</taxon>
        <taxon>Pseudomonas syringae</taxon>
    </lineage>
</organism>
<keyword id="KW-0687">Ribonucleoprotein</keyword>
<keyword id="KW-0689">Ribosomal protein</keyword>
<keyword id="KW-0694">RNA-binding</keyword>
<keyword id="KW-0699">rRNA-binding</keyword>
<dbReference type="EMBL" id="CP000075">
    <property type="protein sequence ID" value="AAY39576.1"/>
    <property type="molecule type" value="Genomic_DNA"/>
</dbReference>
<dbReference type="RefSeq" id="WP_002555488.1">
    <property type="nucleotide sequence ID" value="NC_007005.1"/>
</dbReference>
<dbReference type="RefSeq" id="YP_237614.1">
    <property type="nucleotide sequence ID" value="NC_007005.1"/>
</dbReference>
<dbReference type="SMR" id="Q4ZMP6"/>
<dbReference type="STRING" id="205918.Psyr_4546"/>
<dbReference type="GeneID" id="98113705"/>
<dbReference type="KEGG" id="psb:Psyr_4546"/>
<dbReference type="PATRIC" id="fig|205918.7.peg.4685"/>
<dbReference type="eggNOG" id="COG0089">
    <property type="taxonomic scope" value="Bacteria"/>
</dbReference>
<dbReference type="HOGENOM" id="CLU_037562_3_1_6"/>
<dbReference type="OrthoDB" id="9793353at2"/>
<dbReference type="PRO" id="PR:Q4ZMP6"/>
<dbReference type="Proteomes" id="UP000000426">
    <property type="component" value="Chromosome"/>
</dbReference>
<dbReference type="GO" id="GO:1990904">
    <property type="term" value="C:ribonucleoprotein complex"/>
    <property type="evidence" value="ECO:0007669"/>
    <property type="project" value="UniProtKB-KW"/>
</dbReference>
<dbReference type="GO" id="GO:0005840">
    <property type="term" value="C:ribosome"/>
    <property type="evidence" value="ECO:0007669"/>
    <property type="project" value="UniProtKB-KW"/>
</dbReference>
<dbReference type="GO" id="GO:0019843">
    <property type="term" value="F:rRNA binding"/>
    <property type="evidence" value="ECO:0007669"/>
    <property type="project" value="UniProtKB-UniRule"/>
</dbReference>
<dbReference type="GO" id="GO:0003735">
    <property type="term" value="F:structural constituent of ribosome"/>
    <property type="evidence" value="ECO:0007669"/>
    <property type="project" value="InterPro"/>
</dbReference>
<dbReference type="GO" id="GO:0006412">
    <property type="term" value="P:translation"/>
    <property type="evidence" value="ECO:0007669"/>
    <property type="project" value="UniProtKB-UniRule"/>
</dbReference>
<dbReference type="FunFam" id="3.30.70.330:FF:000001">
    <property type="entry name" value="50S ribosomal protein L23"/>
    <property type="match status" value="1"/>
</dbReference>
<dbReference type="Gene3D" id="3.30.70.330">
    <property type="match status" value="1"/>
</dbReference>
<dbReference type="HAMAP" id="MF_01369_B">
    <property type="entry name" value="Ribosomal_uL23_B"/>
    <property type="match status" value="1"/>
</dbReference>
<dbReference type="InterPro" id="IPR012677">
    <property type="entry name" value="Nucleotide-bd_a/b_plait_sf"/>
</dbReference>
<dbReference type="InterPro" id="IPR013025">
    <property type="entry name" value="Ribosomal_uL23-like"/>
</dbReference>
<dbReference type="InterPro" id="IPR012678">
    <property type="entry name" value="Ribosomal_uL23/eL15/eS24_sf"/>
</dbReference>
<dbReference type="NCBIfam" id="NF004359">
    <property type="entry name" value="PRK05738.1-3"/>
    <property type="match status" value="1"/>
</dbReference>
<dbReference type="NCBIfam" id="NF004363">
    <property type="entry name" value="PRK05738.2-4"/>
    <property type="match status" value="1"/>
</dbReference>
<dbReference type="PANTHER" id="PTHR11620">
    <property type="entry name" value="60S RIBOSOMAL PROTEIN L23A"/>
    <property type="match status" value="1"/>
</dbReference>
<dbReference type="Pfam" id="PF00276">
    <property type="entry name" value="Ribosomal_L23"/>
    <property type="match status" value="1"/>
</dbReference>
<dbReference type="SUPFAM" id="SSF54189">
    <property type="entry name" value="Ribosomal proteins S24e, L23 and L15e"/>
    <property type="match status" value="1"/>
</dbReference>